<feature type="chain" id="PRO_0000240500" description="UPF0367 protein CYA_1023">
    <location>
        <begin position="1"/>
        <end position="89"/>
    </location>
</feature>
<feature type="region of interest" description="Disordered" evidence="2">
    <location>
        <begin position="69"/>
        <end position="89"/>
    </location>
</feature>
<sequence length="89" mass="9412">MYILELLLKGNPAPIVVHQKEEEAANRAYQSVVNALQSGSPQSLELTCDRTGKKVFLLTGELCGVQMTTKSGGPGAPGTRPGFLAQLQG</sequence>
<reference key="1">
    <citation type="journal article" date="2007" name="ISME J.">
        <title>Population level functional diversity in a microbial community revealed by comparative genomic and metagenomic analyses.</title>
        <authorList>
            <person name="Bhaya D."/>
            <person name="Grossman A.R."/>
            <person name="Steunou A.-S."/>
            <person name="Khuri N."/>
            <person name="Cohan F.M."/>
            <person name="Hamamura N."/>
            <person name="Melendrez M.C."/>
            <person name="Bateson M.M."/>
            <person name="Ward D.M."/>
            <person name="Heidelberg J.F."/>
        </authorList>
    </citation>
    <scope>NUCLEOTIDE SEQUENCE [LARGE SCALE GENOMIC DNA]</scope>
    <source>
        <strain>JA-3-3Ab</strain>
    </source>
</reference>
<name>Y1023_SYNJA</name>
<accession>Q2JVL6</accession>
<proteinExistence type="inferred from homology"/>
<gene>
    <name type="ordered locus">CYA_1023</name>
</gene>
<evidence type="ECO:0000255" key="1">
    <source>
        <dbReference type="HAMAP-Rule" id="MF_01360"/>
    </source>
</evidence>
<evidence type="ECO:0000256" key="2">
    <source>
        <dbReference type="SAM" id="MobiDB-lite"/>
    </source>
</evidence>
<organism>
    <name type="scientific">Synechococcus sp. (strain JA-3-3Ab)</name>
    <name type="common">Cyanobacteria bacterium Yellowstone A-Prime</name>
    <dbReference type="NCBI Taxonomy" id="321327"/>
    <lineage>
        <taxon>Bacteria</taxon>
        <taxon>Bacillati</taxon>
        <taxon>Cyanobacteriota</taxon>
        <taxon>Cyanophyceae</taxon>
        <taxon>Synechococcales</taxon>
        <taxon>Synechococcaceae</taxon>
        <taxon>Synechococcus</taxon>
    </lineage>
</organism>
<dbReference type="EMBL" id="CP000239">
    <property type="protein sequence ID" value="ABC99219.1"/>
    <property type="molecule type" value="Genomic_DNA"/>
</dbReference>
<dbReference type="RefSeq" id="WP_011429902.1">
    <property type="nucleotide sequence ID" value="NC_007775.1"/>
</dbReference>
<dbReference type="STRING" id="321327.CYA_1023"/>
<dbReference type="KEGG" id="cya:CYA_1023"/>
<dbReference type="eggNOG" id="ENOG5032YB3">
    <property type="taxonomic scope" value="Bacteria"/>
</dbReference>
<dbReference type="HOGENOM" id="CLU_180777_0_0_3"/>
<dbReference type="OrthoDB" id="516864at2"/>
<dbReference type="Proteomes" id="UP000008818">
    <property type="component" value="Chromosome"/>
</dbReference>
<dbReference type="HAMAP" id="MF_01360">
    <property type="entry name" value="UPF0367"/>
    <property type="match status" value="1"/>
</dbReference>
<dbReference type="InterPro" id="IPR020885">
    <property type="entry name" value="UPF0367"/>
</dbReference>
<dbReference type="NCBIfam" id="NF010236">
    <property type="entry name" value="PRK13683.1"/>
    <property type="match status" value="1"/>
</dbReference>
<protein>
    <recommendedName>
        <fullName evidence="1">UPF0367 protein CYA_1023</fullName>
    </recommendedName>
</protein>
<comment type="similarity">
    <text evidence="1">Belongs to the UPF0367 family.</text>
</comment>